<feature type="chain" id="PRO_0000221410" description="Ribosome-inactivating protein momorcochin-S">
    <location>
        <begin position="1"/>
        <end position="30" status="greater than"/>
    </location>
</feature>
<feature type="non-terminal residue">
    <location>
        <position position="30"/>
    </location>
</feature>
<sequence length="30" mass="3323">DVTFSLLGANTKSYAAFITNFRKDVASEKK</sequence>
<protein>
    <recommendedName>
        <fullName>Ribosome-inactivating protein momorcochin-S</fullName>
        <ecNumber>3.2.2.22</ecNumber>
    </recommendedName>
    <alternativeName>
        <fullName>rRNA N-glycosidase</fullName>
    </alternativeName>
</protein>
<comment type="function">
    <text>Inactivates eukaryotic 60S ribosomal subunits.</text>
</comment>
<comment type="catalytic activity">
    <reaction>
        <text>Endohydrolysis of the N-glycosidic bond at one specific adenosine on the 28S rRNA.</text>
        <dbReference type="EC" id="3.2.2.22"/>
    </reaction>
</comment>
<comment type="PTM">
    <text evidence="1">Glycosylated.</text>
</comment>
<comment type="similarity">
    <text evidence="2">Belongs to the ribosome-inactivating protein family. Type 1 RIP subfamily.</text>
</comment>
<name>RIPS_MOMCO</name>
<dbReference type="EC" id="3.2.2.22"/>
<dbReference type="PIR" id="S07065">
    <property type="entry name" value="S07065"/>
</dbReference>
<dbReference type="SMR" id="P20655"/>
<dbReference type="GO" id="GO:0030598">
    <property type="term" value="F:rRNA N-glycosylase activity"/>
    <property type="evidence" value="ECO:0007669"/>
    <property type="project" value="UniProtKB-EC"/>
</dbReference>
<dbReference type="GO" id="GO:0090729">
    <property type="term" value="F:toxin activity"/>
    <property type="evidence" value="ECO:0007669"/>
    <property type="project" value="UniProtKB-KW"/>
</dbReference>
<dbReference type="GO" id="GO:0006952">
    <property type="term" value="P:defense response"/>
    <property type="evidence" value="ECO:0007669"/>
    <property type="project" value="UniProtKB-KW"/>
</dbReference>
<dbReference type="GO" id="GO:0017148">
    <property type="term" value="P:negative regulation of translation"/>
    <property type="evidence" value="ECO:0007669"/>
    <property type="project" value="UniProtKB-KW"/>
</dbReference>
<dbReference type="InterPro" id="IPR036041">
    <property type="entry name" value="Ribosome-inact_prot_sf"/>
</dbReference>
<dbReference type="SUPFAM" id="SSF56371">
    <property type="entry name" value="Ribosome inactivating proteins (RIP)"/>
    <property type="match status" value="1"/>
</dbReference>
<evidence type="ECO:0000269" key="1">
    <source>
    </source>
</evidence>
<evidence type="ECO:0000305" key="2"/>
<accession>P20655</accession>
<organism>
    <name type="scientific">Momordica cochinchinensis</name>
    <name type="common">Spiny bitter cucumber</name>
    <name type="synonym">Muricia cochinchinensis</name>
    <dbReference type="NCBI Taxonomy" id="3674"/>
    <lineage>
        <taxon>Eukaryota</taxon>
        <taxon>Viridiplantae</taxon>
        <taxon>Streptophyta</taxon>
        <taxon>Embryophyta</taxon>
        <taxon>Tracheophyta</taxon>
        <taxon>Spermatophyta</taxon>
        <taxon>Magnoliopsida</taxon>
        <taxon>eudicotyledons</taxon>
        <taxon>Gunneridae</taxon>
        <taxon>Pentapetalae</taxon>
        <taxon>rosids</taxon>
        <taxon>fabids</taxon>
        <taxon>Cucurbitales</taxon>
        <taxon>Cucurbitaceae</taxon>
        <taxon>Momordiceae</taxon>
        <taxon>Momordica</taxon>
    </lineage>
</organism>
<proteinExistence type="evidence at protein level"/>
<reference key="1">
    <citation type="journal article" date="1989" name="Biochim. Biophys. Acta">
        <title>Purification and properties of a new ribosome-inactivating protein with RNA N-glycosidase activity suitable for immunotoxin preparation from the seeds of Momordica cochinchinensis.</title>
        <authorList>
            <person name="Bolognesi A."/>
            <person name="Barbieri L."/>
            <person name="Carnicelli D."/>
            <person name="Abbondanza A."/>
            <person name="Cenini P."/>
            <person name="Falasca A.I."/>
            <person name="Dinota A."/>
            <person name="Stirpe F."/>
        </authorList>
    </citation>
    <scope>PROTEIN SEQUENCE</scope>
    <scope>GLYCOSYLATION</scope>
    <source>
        <tissue>Seed</tissue>
    </source>
</reference>
<keyword id="KW-0903">Direct protein sequencing</keyword>
<keyword id="KW-0325">Glycoprotein</keyword>
<keyword id="KW-0378">Hydrolase</keyword>
<keyword id="KW-0611">Plant defense</keyword>
<keyword id="KW-0652">Protein synthesis inhibitor</keyword>
<keyword id="KW-0800">Toxin</keyword>